<evidence type="ECO:0000255" key="1">
    <source>
        <dbReference type="HAMAP-Rule" id="MF_00122"/>
    </source>
</evidence>
<dbReference type="EC" id="6.3.5.-" evidence="1"/>
<dbReference type="EMBL" id="CP000474">
    <property type="protein sequence ID" value="ABM09656.1"/>
    <property type="molecule type" value="Genomic_DNA"/>
</dbReference>
<dbReference type="RefSeq" id="WP_011774169.1">
    <property type="nucleotide sequence ID" value="NC_008711.1"/>
</dbReference>
<dbReference type="SMR" id="A1R4R0"/>
<dbReference type="STRING" id="290340.AAur_1448"/>
<dbReference type="KEGG" id="aau:AAur_1448"/>
<dbReference type="eggNOG" id="COG0721">
    <property type="taxonomic scope" value="Bacteria"/>
</dbReference>
<dbReference type="HOGENOM" id="CLU_105899_1_0_11"/>
<dbReference type="OrthoDB" id="5295223at2"/>
<dbReference type="Proteomes" id="UP000000637">
    <property type="component" value="Chromosome"/>
</dbReference>
<dbReference type="GO" id="GO:0050566">
    <property type="term" value="F:asparaginyl-tRNA synthase (glutamine-hydrolyzing) activity"/>
    <property type="evidence" value="ECO:0007669"/>
    <property type="project" value="RHEA"/>
</dbReference>
<dbReference type="GO" id="GO:0005524">
    <property type="term" value="F:ATP binding"/>
    <property type="evidence" value="ECO:0007669"/>
    <property type="project" value="UniProtKB-KW"/>
</dbReference>
<dbReference type="GO" id="GO:0050567">
    <property type="term" value="F:glutaminyl-tRNA synthase (glutamine-hydrolyzing) activity"/>
    <property type="evidence" value="ECO:0007669"/>
    <property type="project" value="UniProtKB-UniRule"/>
</dbReference>
<dbReference type="GO" id="GO:0006450">
    <property type="term" value="P:regulation of translational fidelity"/>
    <property type="evidence" value="ECO:0007669"/>
    <property type="project" value="InterPro"/>
</dbReference>
<dbReference type="GO" id="GO:0006412">
    <property type="term" value="P:translation"/>
    <property type="evidence" value="ECO:0007669"/>
    <property type="project" value="UniProtKB-UniRule"/>
</dbReference>
<dbReference type="Gene3D" id="1.10.20.60">
    <property type="entry name" value="Glu-tRNAGln amidotransferase C subunit, N-terminal domain"/>
    <property type="match status" value="1"/>
</dbReference>
<dbReference type="HAMAP" id="MF_00122">
    <property type="entry name" value="GatC"/>
    <property type="match status" value="1"/>
</dbReference>
<dbReference type="InterPro" id="IPR036113">
    <property type="entry name" value="Asp/Glu-ADT_sf_sub_c"/>
</dbReference>
<dbReference type="InterPro" id="IPR003837">
    <property type="entry name" value="GatC"/>
</dbReference>
<dbReference type="NCBIfam" id="TIGR00135">
    <property type="entry name" value="gatC"/>
    <property type="match status" value="1"/>
</dbReference>
<dbReference type="Pfam" id="PF02686">
    <property type="entry name" value="GatC"/>
    <property type="match status" value="1"/>
</dbReference>
<dbReference type="SUPFAM" id="SSF141000">
    <property type="entry name" value="Glu-tRNAGln amidotransferase C subunit"/>
    <property type="match status" value="1"/>
</dbReference>
<sequence length="98" mass="10585">MAAINRDDVAHLARLAHIEMSAEELDRMAVELAVIVDSVKSVSEAAGEDVPATSHPIPLTNVFREDVVGHTFTAEQALSGAPDSYENRFKVPAILDED</sequence>
<organism>
    <name type="scientific">Paenarthrobacter aurescens (strain TC1)</name>
    <dbReference type="NCBI Taxonomy" id="290340"/>
    <lineage>
        <taxon>Bacteria</taxon>
        <taxon>Bacillati</taxon>
        <taxon>Actinomycetota</taxon>
        <taxon>Actinomycetes</taxon>
        <taxon>Micrococcales</taxon>
        <taxon>Micrococcaceae</taxon>
        <taxon>Paenarthrobacter</taxon>
    </lineage>
</organism>
<protein>
    <recommendedName>
        <fullName evidence="1">Aspartyl/glutamyl-tRNA(Asn/Gln) amidotransferase subunit C</fullName>
        <shortName evidence="1">Asp/Glu-ADT subunit C</shortName>
        <ecNumber evidence="1">6.3.5.-</ecNumber>
    </recommendedName>
</protein>
<gene>
    <name evidence="1" type="primary">gatC</name>
    <name type="ordered locus">AAur_1448</name>
</gene>
<keyword id="KW-0067">ATP-binding</keyword>
<keyword id="KW-0436">Ligase</keyword>
<keyword id="KW-0547">Nucleotide-binding</keyword>
<keyword id="KW-0648">Protein biosynthesis</keyword>
<reference key="1">
    <citation type="journal article" date="2006" name="PLoS Genet.">
        <title>Secrets of soil survival revealed by the genome sequence of Arthrobacter aurescens TC1.</title>
        <authorList>
            <person name="Mongodin E.F."/>
            <person name="Shapir N."/>
            <person name="Daugherty S.C."/>
            <person name="DeBoy R.T."/>
            <person name="Emerson J.B."/>
            <person name="Shvartzbeyn A."/>
            <person name="Radune D."/>
            <person name="Vamathevan J."/>
            <person name="Riggs F."/>
            <person name="Grinberg V."/>
            <person name="Khouri H.M."/>
            <person name="Wackett L.P."/>
            <person name="Nelson K.E."/>
            <person name="Sadowsky M.J."/>
        </authorList>
    </citation>
    <scope>NUCLEOTIDE SEQUENCE [LARGE SCALE GENOMIC DNA]</scope>
    <source>
        <strain>TC1</strain>
    </source>
</reference>
<name>GATC_PAEAT</name>
<feature type="chain" id="PRO_1000016063" description="Aspartyl/glutamyl-tRNA(Asn/Gln) amidotransferase subunit C">
    <location>
        <begin position="1"/>
        <end position="98"/>
    </location>
</feature>
<proteinExistence type="inferred from homology"/>
<accession>A1R4R0</accession>
<comment type="function">
    <text evidence="1">Allows the formation of correctly charged Asn-tRNA(Asn) or Gln-tRNA(Gln) through the transamidation of misacylated Asp-tRNA(Asn) or Glu-tRNA(Gln) in organisms which lack either or both of asparaginyl-tRNA or glutaminyl-tRNA synthetases. The reaction takes place in the presence of glutamine and ATP through an activated phospho-Asp-tRNA(Asn) or phospho-Glu-tRNA(Gln).</text>
</comment>
<comment type="catalytic activity">
    <reaction evidence="1">
        <text>L-glutamyl-tRNA(Gln) + L-glutamine + ATP + H2O = L-glutaminyl-tRNA(Gln) + L-glutamate + ADP + phosphate + H(+)</text>
        <dbReference type="Rhea" id="RHEA:17521"/>
        <dbReference type="Rhea" id="RHEA-COMP:9681"/>
        <dbReference type="Rhea" id="RHEA-COMP:9684"/>
        <dbReference type="ChEBI" id="CHEBI:15377"/>
        <dbReference type="ChEBI" id="CHEBI:15378"/>
        <dbReference type="ChEBI" id="CHEBI:29985"/>
        <dbReference type="ChEBI" id="CHEBI:30616"/>
        <dbReference type="ChEBI" id="CHEBI:43474"/>
        <dbReference type="ChEBI" id="CHEBI:58359"/>
        <dbReference type="ChEBI" id="CHEBI:78520"/>
        <dbReference type="ChEBI" id="CHEBI:78521"/>
        <dbReference type="ChEBI" id="CHEBI:456216"/>
    </reaction>
</comment>
<comment type="catalytic activity">
    <reaction evidence="1">
        <text>L-aspartyl-tRNA(Asn) + L-glutamine + ATP + H2O = L-asparaginyl-tRNA(Asn) + L-glutamate + ADP + phosphate + 2 H(+)</text>
        <dbReference type="Rhea" id="RHEA:14513"/>
        <dbReference type="Rhea" id="RHEA-COMP:9674"/>
        <dbReference type="Rhea" id="RHEA-COMP:9677"/>
        <dbReference type="ChEBI" id="CHEBI:15377"/>
        <dbReference type="ChEBI" id="CHEBI:15378"/>
        <dbReference type="ChEBI" id="CHEBI:29985"/>
        <dbReference type="ChEBI" id="CHEBI:30616"/>
        <dbReference type="ChEBI" id="CHEBI:43474"/>
        <dbReference type="ChEBI" id="CHEBI:58359"/>
        <dbReference type="ChEBI" id="CHEBI:78515"/>
        <dbReference type="ChEBI" id="CHEBI:78516"/>
        <dbReference type="ChEBI" id="CHEBI:456216"/>
    </reaction>
</comment>
<comment type="subunit">
    <text evidence="1">Heterotrimer of A, B and C subunits.</text>
</comment>
<comment type="similarity">
    <text evidence="1">Belongs to the GatC family.</text>
</comment>